<sequence>MPPTNNYRISGEPPSTTPSHPPPKPKTRILSLFLVGVIMFSIFFLFLVLIGIASVLILPLLLSSLHRHHRRRRRNRRQESSDGLSSRFVKKLPQFKFSEPSTYTRYESDCVVCFDGFRQGQWCRNLPGCGHVFHRKCVDTWLLKASTCPICRARVRLWEEDPQEGELWRCFGHRRSSLLDL</sequence>
<protein>
    <recommendedName>
        <fullName>RING-H2 finger protein ATL56</fullName>
        <ecNumber evidence="5">2.3.2.27</ecNumber>
    </recommendedName>
    <alternativeName>
        <fullName evidence="5">RING-type E3 ubiquitin transferase ATL56</fullName>
    </alternativeName>
</protein>
<accession>Q9ZV51</accession>
<accession>Q8L900</accession>
<comment type="catalytic activity">
    <reaction evidence="5">
        <text>S-ubiquitinyl-[E2 ubiquitin-conjugating enzyme]-L-cysteine + [acceptor protein]-L-lysine = [E2 ubiquitin-conjugating enzyme]-L-cysteine + N(6)-ubiquitinyl-[acceptor protein]-L-lysine.</text>
        <dbReference type="EC" id="2.3.2.27"/>
    </reaction>
</comment>
<comment type="pathway">
    <text>Protein modification; protein ubiquitination.</text>
</comment>
<comment type="subcellular location">
    <subcellularLocation>
        <location evidence="5">Membrane</location>
        <topology evidence="5">Single-pass membrane protein</topology>
    </subcellularLocation>
</comment>
<comment type="domain">
    <text evidence="1">The RING-type zinc finger domain mediates binding to an E2 ubiquitin-conjugating enzyme.</text>
</comment>
<comment type="similarity">
    <text evidence="5">Belongs to the RING-type zinc finger family. ATL subfamily.</text>
</comment>
<keyword id="KW-0472">Membrane</keyword>
<keyword id="KW-0479">Metal-binding</keyword>
<keyword id="KW-1185">Reference proteome</keyword>
<keyword id="KW-0808">Transferase</keyword>
<keyword id="KW-0812">Transmembrane</keyword>
<keyword id="KW-1133">Transmembrane helix</keyword>
<keyword id="KW-0833">Ubl conjugation pathway</keyword>
<keyword id="KW-0862">Zinc</keyword>
<keyword id="KW-0863">Zinc-finger</keyword>
<reference key="1">
    <citation type="journal article" date="2005" name="Plant Physiol.">
        <title>Functional analysis of the RING-type ubiquitin ligase family of Arabidopsis.</title>
        <authorList>
            <person name="Stone S.L."/>
            <person name="Hauksdottir H."/>
            <person name="Troy A."/>
            <person name="Herschleb J."/>
            <person name="Kraft E."/>
            <person name="Callis J."/>
        </authorList>
    </citation>
    <scope>NUCLEOTIDE SEQUENCE [MRNA]</scope>
    <source>
        <strain>cv. Columbia</strain>
        <tissue>Leaf</tissue>
    </source>
</reference>
<reference key="2">
    <citation type="journal article" date="1999" name="Nature">
        <title>Sequence and analysis of chromosome 2 of the plant Arabidopsis thaliana.</title>
        <authorList>
            <person name="Lin X."/>
            <person name="Kaul S."/>
            <person name="Rounsley S.D."/>
            <person name="Shea T.P."/>
            <person name="Benito M.-I."/>
            <person name="Town C.D."/>
            <person name="Fujii C.Y."/>
            <person name="Mason T.M."/>
            <person name="Bowman C.L."/>
            <person name="Barnstead M.E."/>
            <person name="Feldblyum T.V."/>
            <person name="Buell C.R."/>
            <person name="Ketchum K.A."/>
            <person name="Lee J.J."/>
            <person name="Ronning C.M."/>
            <person name="Koo H.L."/>
            <person name="Moffat K.S."/>
            <person name="Cronin L.A."/>
            <person name="Shen M."/>
            <person name="Pai G."/>
            <person name="Van Aken S."/>
            <person name="Umayam L."/>
            <person name="Tallon L.J."/>
            <person name="Gill J.E."/>
            <person name="Adams M.D."/>
            <person name="Carrera A.J."/>
            <person name="Creasy T.H."/>
            <person name="Goodman H.M."/>
            <person name="Somerville C.R."/>
            <person name="Copenhaver G.P."/>
            <person name="Preuss D."/>
            <person name="Nierman W.C."/>
            <person name="White O."/>
            <person name="Eisen J.A."/>
            <person name="Salzberg S.L."/>
            <person name="Fraser C.M."/>
            <person name="Venter J.C."/>
        </authorList>
    </citation>
    <scope>NUCLEOTIDE SEQUENCE [LARGE SCALE GENOMIC DNA]</scope>
    <source>
        <strain>cv. Columbia</strain>
    </source>
</reference>
<reference key="3">
    <citation type="journal article" date="2017" name="Plant J.">
        <title>Araport11: a complete reannotation of the Arabidopsis thaliana reference genome.</title>
        <authorList>
            <person name="Cheng C.Y."/>
            <person name="Krishnakumar V."/>
            <person name="Chan A.P."/>
            <person name="Thibaud-Nissen F."/>
            <person name="Schobel S."/>
            <person name="Town C.D."/>
        </authorList>
    </citation>
    <scope>GENOME REANNOTATION</scope>
    <source>
        <strain>cv. Columbia</strain>
    </source>
</reference>
<reference key="4">
    <citation type="journal article" date="2003" name="Science">
        <title>Empirical analysis of transcriptional activity in the Arabidopsis genome.</title>
        <authorList>
            <person name="Yamada K."/>
            <person name="Lim J."/>
            <person name="Dale J.M."/>
            <person name="Chen H."/>
            <person name="Shinn P."/>
            <person name="Palm C.J."/>
            <person name="Southwick A.M."/>
            <person name="Wu H.C."/>
            <person name="Kim C.J."/>
            <person name="Nguyen M."/>
            <person name="Pham P.K."/>
            <person name="Cheuk R.F."/>
            <person name="Karlin-Newmann G."/>
            <person name="Liu S.X."/>
            <person name="Lam B."/>
            <person name="Sakano H."/>
            <person name="Wu T."/>
            <person name="Yu G."/>
            <person name="Miranda M."/>
            <person name="Quach H.L."/>
            <person name="Tripp M."/>
            <person name="Chang C.H."/>
            <person name="Lee J.M."/>
            <person name="Toriumi M.J."/>
            <person name="Chan M.M."/>
            <person name="Tang C.C."/>
            <person name="Onodera C.S."/>
            <person name="Deng J.M."/>
            <person name="Akiyama K."/>
            <person name="Ansari Y."/>
            <person name="Arakawa T."/>
            <person name="Banh J."/>
            <person name="Banno F."/>
            <person name="Bowser L."/>
            <person name="Brooks S.Y."/>
            <person name="Carninci P."/>
            <person name="Chao Q."/>
            <person name="Choy N."/>
            <person name="Enju A."/>
            <person name="Goldsmith A.D."/>
            <person name="Gurjal M."/>
            <person name="Hansen N.F."/>
            <person name="Hayashizaki Y."/>
            <person name="Johnson-Hopson C."/>
            <person name="Hsuan V.W."/>
            <person name="Iida K."/>
            <person name="Karnes M."/>
            <person name="Khan S."/>
            <person name="Koesema E."/>
            <person name="Ishida J."/>
            <person name="Jiang P.X."/>
            <person name="Jones T."/>
            <person name="Kawai J."/>
            <person name="Kamiya A."/>
            <person name="Meyers C."/>
            <person name="Nakajima M."/>
            <person name="Narusaka M."/>
            <person name="Seki M."/>
            <person name="Sakurai T."/>
            <person name="Satou M."/>
            <person name="Tamse R."/>
            <person name="Vaysberg M."/>
            <person name="Wallender E.K."/>
            <person name="Wong C."/>
            <person name="Yamamura Y."/>
            <person name="Yuan S."/>
            <person name="Shinozaki K."/>
            <person name="Davis R.W."/>
            <person name="Theologis A."/>
            <person name="Ecker J.R."/>
        </authorList>
    </citation>
    <scope>NUCLEOTIDE SEQUENCE [LARGE SCALE MRNA]</scope>
    <source>
        <strain>cv. Columbia</strain>
    </source>
</reference>
<reference key="5">
    <citation type="submission" date="2002-03" db="EMBL/GenBank/DDBJ databases">
        <title>Full-length cDNA from Arabidopsis thaliana.</title>
        <authorList>
            <person name="Brover V.V."/>
            <person name="Troukhan M.E."/>
            <person name="Alexandrov N.A."/>
            <person name="Lu Y.-P."/>
            <person name="Flavell R.B."/>
            <person name="Feldmann K.A."/>
        </authorList>
    </citation>
    <scope>NUCLEOTIDE SEQUENCE [LARGE SCALE MRNA]</scope>
</reference>
<reference key="6">
    <citation type="journal article" date="2002" name="Genome Biol.">
        <title>Evaluation and classification of RING-finger domains encoded by the Arabidopsis genome.</title>
        <authorList>
            <person name="Kosarev P."/>
            <person name="Mayer K.F.X."/>
            <person name="Hardtke C.S."/>
        </authorList>
    </citation>
    <scope>GENE FAMILY ORGANIZATION</scope>
</reference>
<reference key="7">
    <citation type="journal article" date="2006" name="J. Mol. Evol.">
        <title>The ATL gene family from Arabidopsis thaliana and Oryza sativa comprises a large number of putative ubiquitin ligases of the RING-H2 type.</title>
        <authorList>
            <person name="Serrano M."/>
            <person name="Parra S."/>
            <person name="Alcaraz L.D."/>
            <person name="Guzman P."/>
        </authorList>
    </citation>
    <scope>NOMENCLATURE</scope>
    <scope>GENE FAMILY ORGANIZATION</scope>
</reference>
<feature type="chain" id="PRO_0000396124" description="RING-H2 finger protein ATL56">
    <location>
        <begin position="1"/>
        <end position="181"/>
    </location>
</feature>
<feature type="transmembrane region" description="Helical" evidence="2">
    <location>
        <begin position="32"/>
        <end position="52"/>
    </location>
</feature>
<feature type="zinc finger region" description="RING-type; atypical" evidence="3">
    <location>
        <begin position="110"/>
        <end position="152"/>
    </location>
</feature>
<feature type="region of interest" description="Disordered" evidence="4">
    <location>
        <begin position="1"/>
        <end position="24"/>
    </location>
</feature>
<feature type="compositionally biased region" description="Pro residues" evidence="4">
    <location>
        <begin position="15"/>
        <end position="24"/>
    </location>
</feature>
<feature type="sequence conflict" description="In Ref. 5; AAM67030." evidence="5" ref="5">
    <original>H</original>
    <variation>P</variation>
    <location>
        <position position="20"/>
    </location>
</feature>
<proteinExistence type="evidence at transcript level"/>
<name>ATL56_ARATH</name>
<organism>
    <name type="scientific">Arabidopsis thaliana</name>
    <name type="common">Mouse-ear cress</name>
    <dbReference type="NCBI Taxonomy" id="3702"/>
    <lineage>
        <taxon>Eukaryota</taxon>
        <taxon>Viridiplantae</taxon>
        <taxon>Streptophyta</taxon>
        <taxon>Embryophyta</taxon>
        <taxon>Tracheophyta</taxon>
        <taxon>Spermatophyta</taxon>
        <taxon>Magnoliopsida</taxon>
        <taxon>eudicotyledons</taxon>
        <taxon>Gunneridae</taxon>
        <taxon>Pentapetalae</taxon>
        <taxon>rosids</taxon>
        <taxon>malvids</taxon>
        <taxon>Brassicales</taxon>
        <taxon>Brassicaceae</taxon>
        <taxon>Camelineae</taxon>
        <taxon>Arabidopsis</taxon>
    </lineage>
</organism>
<dbReference type="EC" id="2.3.2.27" evidence="5"/>
<dbReference type="EMBL" id="DQ059107">
    <property type="protein sequence ID" value="AAY57593.1"/>
    <property type="molecule type" value="mRNA"/>
</dbReference>
<dbReference type="EMBL" id="AC005724">
    <property type="protein sequence ID" value="AAD08936.1"/>
    <property type="molecule type" value="Genomic_DNA"/>
</dbReference>
<dbReference type="EMBL" id="CP002685">
    <property type="protein sequence ID" value="AEC06791.1"/>
    <property type="molecule type" value="Genomic_DNA"/>
</dbReference>
<dbReference type="EMBL" id="AY052699">
    <property type="protein sequence ID" value="AAK96603.1"/>
    <property type="molecule type" value="mRNA"/>
</dbReference>
<dbReference type="EMBL" id="AY098955">
    <property type="protein sequence ID" value="AAM19965.1"/>
    <property type="molecule type" value="mRNA"/>
</dbReference>
<dbReference type="EMBL" id="AY088712">
    <property type="protein sequence ID" value="AAM67030.1"/>
    <property type="molecule type" value="mRNA"/>
</dbReference>
<dbReference type="PIR" id="B84567">
    <property type="entry name" value="B84567"/>
</dbReference>
<dbReference type="RefSeq" id="NP_179457.1">
    <property type="nucleotide sequence ID" value="NM_127423.4"/>
</dbReference>
<dbReference type="SMR" id="Q9ZV51"/>
<dbReference type="BioGRID" id="1739">
    <property type="interactions" value="9"/>
</dbReference>
<dbReference type="FunCoup" id="Q9ZV51">
    <property type="interactions" value="12"/>
</dbReference>
<dbReference type="IntAct" id="Q9ZV51">
    <property type="interactions" value="9"/>
</dbReference>
<dbReference type="STRING" id="3702.Q9ZV51"/>
<dbReference type="GlyGen" id="Q9ZV51">
    <property type="glycosylation" value="1 site"/>
</dbReference>
<dbReference type="PaxDb" id="3702-AT2G18670.1"/>
<dbReference type="EnsemblPlants" id="AT2G18670.1">
    <property type="protein sequence ID" value="AT2G18670.1"/>
    <property type="gene ID" value="AT2G18670"/>
</dbReference>
<dbReference type="GeneID" id="816382"/>
<dbReference type="Gramene" id="AT2G18670.1">
    <property type="protein sequence ID" value="AT2G18670.1"/>
    <property type="gene ID" value="AT2G18670"/>
</dbReference>
<dbReference type="KEGG" id="ath:AT2G18670"/>
<dbReference type="Araport" id="AT2G18670"/>
<dbReference type="TAIR" id="AT2G18670">
    <property type="gene designation" value="ATL56"/>
</dbReference>
<dbReference type="eggNOG" id="KOG0800">
    <property type="taxonomic scope" value="Eukaryota"/>
</dbReference>
<dbReference type="HOGENOM" id="CLU_013137_15_5_1"/>
<dbReference type="InParanoid" id="Q9ZV51"/>
<dbReference type="OMA" id="VGCGHLF"/>
<dbReference type="PhylomeDB" id="Q9ZV51"/>
<dbReference type="UniPathway" id="UPA00143"/>
<dbReference type="PRO" id="PR:Q9ZV51"/>
<dbReference type="Proteomes" id="UP000006548">
    <property type="component" value="Chromosome 2"/>
</dbReference>
<dbReference type="ExpressionAtlas" id="Q9ZV51">
    <property type="expression patterns" value="baseline and differential"/>
</dbReference>
<dbReference type="GO" id="GO:0016020">
    <property type="term" value="C:membrane"/>
    <property type="evidence" value="ECO:0007669"/>
    <property type="project" value="UniProtKB-SubCell"/>
</dbReference>
<dbReference type="GO" id="GO:0016740">
    <property type="term" value="F:transferase activity"/>
    <property type="evidence" value="ECO:0007669"/>
    <property type="project" value="UniProtKB-KW"/>
</dbReference>
<dbReference type="GO" id="GO:0008270">
    <property type="term" value="F:zinc ion binding"/>
    <property type="evidence" value="ECO:0007669"/>
    <property type="project" value="UniProtKB-KW"/>
</dbReference>
<dbReference type="GO" id="GO:0071456">
    <property type="term" value="P:cellular response to hypoxia"/>
    <property type="evidence" value="ECO:0007007"/>
    <property type="project" value="TAIR"/>
</dbReference>
<dbReference type="GO" id="GO:0016567">
    <property type="term" value="P:protein ubiquitination"/>
    <property type="evidence" value="ECO:0007669"/>
    <property type="project" value="UniProtKB-UniPathway"/>
</dbReference>
<dbReference type="CDD" id="cd16454">
    <property type="entry name" value="RING-H2_PA-TM-RING"/>
    <property type="match status" value="1"/>
</dbReference>
<dbReference type="Gene3D" id="3.30.40.10">
    <property type="entry name" value="Zinc/RING finger domain, C3HC4 (zinc finger)"/>
    <property type="match status" value="1"/>
</dbReference>
<dbReference type="InterPro" id="IPR001841">
    <property type="entry name" value="Znf_RING"/>
</dbReference>
<dbReference type="InterPro" id="IPR013083">
    <property type="entry name" value="Znf_RING/FYVE/PHD"/>
</dbReference>
<dbReference type="PANTHER" id="PTHR46539">
    <property type="entry name" value="E3 UBIQUITIN-PROTEIN LIGASE ATL42"/>
    <property type="match status" value="1"/>
</dbReference>
<dbReference type="PANTHER" id="PTHR46539:SF9">
    <property type="entry name" value="RING-H2 FINGER PROTEIN ATL56"/>
    <property type="match status" value="1"/>
</dbReference>
<dbReference type="Pfam" id="PF13639">
    <property type="entry name" value="zf-RING_2"/>
    <property type="match status" value="1"/>
</dbReference>
<dbReference type="SMART" id="SM00184">
    <property type="entry name" value="RING"/>
    <property type="match status" value="1"/>
</dbReference>
<dbReference type="SUPFAM" id="SSF57850">
    <property type="entry name" value="RING/U-box"/>
    <property type="match status" value="1"/>
</dbReference>
<dbReference type="PROSITE" id="PS50089">
    <property type="entry name" value="ZF_RING_2"/>
    <property type="match status" value="1"/>
</dbReference>
<gene>
    <name type="primary">ATL56</name>
    <name type="ordered locus">At2g18670</name>
    <name type="ORF">MSF3.5</name>
</gene>
<evidence type="ECO:0000250" key="1"/>
<evidence type="ECO:0000255" key="2"/>
<evidence type="ECO:0000255" key="3">
    <source>
        <dbReference type="PROSITE-ProRule" id="PRU00175"/>
    </source>
</evidence>
<evidence type="ECO:0000256" key="4">
    <source>
        <dbReference type="SAM" id="MobiDB-lite"/>
    </source>
</evidence>
<evidence type="ECO:0000305" key="5"/>